<accession>O64966</accession>
<comment type="function">
    <text>Catalyzes the synthesis of mevalonate. The specific precursor of all isoprenoid compounds present in plants.</text>
</comment>
<comment type="catalytic activity">
    <reaction evidence="3">
        <text>(R)-mevalonate + 2 NADP(+) + CoA = (3S)-3-hydroxy-3-methylglutaryl-CoA + 2 NADPH + 2 H(+)</text>
        <dbReference type="Rhea" id="RHEA:15989"/>
        <dbReference type="ChEBI" id="CHEBI:15378"/>
        <dbReference type="ChEBI" id="CHEBI:36464"/>
        <dbReference type="ChEBI" id="CHEBI:43074"/>
        <dbReference type="ChEBI" id="CHEBI:57287"/>
        <dbReference type="ChEBI" id="CHEBI:57783"/>
        <dbReference type="ChEBI" id="CHEBI:58349"/>
        <dbReference type="EC" id="1.1.1.34"/>
    </reaction>
</comment>
<comment type="pathway">
    <text>Metabolic intermediate biosynthesis; (R)-mevalonate biosynthesis; (R)-mevalonate from acetyl-CoA: step 3/3.</text>
</comment>
<comment type="subcellular location">
    <subcellularLocation>
        <location>Endoplasmic reticulum membrane</location>
        <topology>Multi-pass membrane protein</topology>
    </subcellularLocation>
    <subcellularLocation>
        <location>Mitochondrion membrane</location>
        <topology>Multi-pass membrane protein</topology>
    </subcellularLocation>
    <subcellularLocation>
        <location>Plastid membrane</location>
        <topology>Multi-pass membrane protein</topology>
    </subcellularLocation>
</comment>
<comment type="similarity">
    <text evidence="4">Belongs to the HMG-CoA reductase family.</text>
</comment>
<dbReference type="EC" id="1.1.1.34"/>
<dbReference type="EMBL" id="AF038045">
    <property type="protein sequence ID" value="AAC05088.1"/>
    <property type="molecule type" value="Genomic_DNA"/>
</dbReference>
<dbReference type="PIR" id="T09782">
    <property type="entry name" value="T09782"/>
</dbReference>
<dbReference type="SMR" id="O64966"/>
<dbReference type="STRING" id="3635.O64966"/>
<dbReference type="GlyCosmos" id="O64966">
    <property type="glycosylation" value="3 sites, No reported glycans"/>
</dbReference>
<dbReference type="PaxDb" id="3635-O64966"/>
<dbReference type="UniPathway" id="UPA00058">
    <property type="reaction ID" value="UER00103"/>
</dbReference>
<dbReference type="Proteomes" id="UP000189702">
    <property type="component" value="Unplaced"/>
</dbReference>
<dbReference type="GO" id="GO:0005789">
    <property type="term" value="C:endoplasmic reticulum membrane"/>
    <property type="evidence" value="ECO:0000318"/>
    <property type="project" value="GO_Central"/>
</dbReference>
<dbReference type="GO" id="GO:0031966">
    <property type="term" value="C:mitochondrial membrane"/>
    <property type="evidence" value="ECO:0007669"/>
    <property type="project" value="UniProtKB-SubCell"/>
</dbReference>
<dbReference type="GO" id="GO:0005778">
    <property type="term" value="C:peroxisomal membrane"/>
    <property type="evidence" value="ECO:0000318"/>
    <property type="project" value="GO_Central"/>
</dbReference>
<dbReference type="GO" id="GO:0042170">
    <property type="term" value="C:plastid membrane"/>
    <property type="evidence" value="ECO:0007669"/>
    <property type="project" value="UniProtKB-SubCell"/>
</dbReference>
<dbReference type="GO" id="GO:0004420">
    <property type="term" value="F:hydroxymethylglutaryl-CoA reductase (NADPH) activity"/>
    <property type="evidence" value="ECO:0000318"/>
    <property type="project" value="GO_Central"/>
</dbReference>
<dbReference type="GO" id="GO:0015936">
    <property type="term" value="P:coenzyme A metabolic process"/>
    <property type="evidence" value="ECO:0007669"/>
    <property type="project" value="InterPro"/>
</dbReference>
<dbReference type="GO" id="GO:0008299">
    <property type="term" value="P:isoprenoid biosynthetic process"/>
    <property type="evidence" value="ECO:0000318"/>
    <property type="project" value="GO_Central"/>
</dbReference>
<dbReference type="GO" id="GO:0016126">
    <property type="term" value="P:sterol biosynthetic process"/>
    <property type="evidence" value="ECO:0000318"/>
    <property type="project" value="GO_Central"/>
</dbReference>
<dbReference type="CDD" id="cd00643">
    <property type="entry name" value="HMG-CoA_reductase_classI"/>
    <property type="match status" value="1"/>
</dbReference>
<dbReference type="FunFam" id="1.10.3270.10:FF:000002">
    <property type="entry name" value="3-hydroxy-3-methylglutaryl coenzyme A reductase"/>
    <property type="match status" value="1"/>
</dbReference>
<dbReference type="FunFam" id="3.30.70.420:FF:000001">
    <property type="entry name" value="3-hydroxy-3-methylglutaryl coenzyme A reductase"/>
    <property type="match status" value="1"/>
</dbReference>
<dbReference type="FunFam" id="3.90.770.10:FF:000001">
    <property type="entry name" value="3-hydroxy-3-methylglutaryl coenzyme A reductase"/>
    <property type="match status" value="1"/>
</dbReference>
<dbReference type="Gene3D" id="3.90.770.10">
    <property type="entry name" value="3-hydroxy-3-methylglutaryl-coenzyme A Reductase, Chain A, domain 2"/>
    <property type="match status" value="1"/>
</dbReference>
<dbReference type="Gene3D" id="1.10.3270.10">
    <property type="entry name" value="HMGR, N-terminal domain"/>
    <property type="match status" value="1"/>
</dbReference>
<dbReference type="Gene3D" id="3.30.70.420">
    <property type="entry name" value="Hydroxymethylglutaryl-CoA reductase, class I/II, NAD/NADP-binding domain"/>
    <property type="match status" value="1"/>
</dbReference>
<dbReference type="InterPro" id="IPR002202">
    <property type="entry name" value="HMG_CoA_Rdtase"/>
</dbReference>
<dbReference type="InterPro" id="IPR023074">
    <property type="entry name" value="HMG_CoA_Rdtase_cat_sf"/>
</dbReference>
<dbReference type="InterPro" id="IPR023076">
    <property type="entry name" value="HMG_CoA_Rdtase_CS"/>
</dbReference>
<dbReference type="InterPro" id="IPR004554">
    <property type="entry name" value="HMG_CoA_Rdtase_eu_arc"/>
</dbReference>
<dbReference type="InterPro" id="IPR023282">
    <property type="entry name" value="HMG_CoA_Rdtase_N"/>
</dbReference>
<dbReference type="InterPro" id="IPR009023">
    <property type="entry name" value="HMG_CoA_Rdtase_NAD(P)-bd_sf"/>
</dbReference>
<dbReference type="InterPro" id="IPR009029">
    <property type="entry name" value="HMG_CoA_Rdtase_sub-bd_dom_sf"/>
</dbReference>
<dbReference type="NCBIfam" id="TIGR00533">
    <property type="entry name" value="HMG_CoA_R_NADP"/>
    <property type="match status" value="1"/>
</dbReference>
<dbReference type="PANTHER" id="PTHR10572">
    <property type="entry name" value="3-HYDROXY-3-METHYLGLUTARYL-COENZYME A REDUCTASE"/>
    <property type="match status" value="1"/>
</dbReference>
<dbReference type="PANTHER" id="PTHR10572:SF44">
    <property type="entry name" value="3-HYDROXY-3-METHYLGLUTARYL-COENZYME A REDUCTASE 1"/>
    <property type="match status" value="1"/>
</dbReference>
<dbReference type="Pfam" id="PF00368">
    <property type="entry name" value="HMG-CoA_red"/>
    <property type="match status" value="1"/>
</dbReference>
<dbReference type="PRINTS" id="PR00071">
    <property type="entry name" value="HMGCOARDTASE"/>
</dbReference>
<dbReference type="SUPFAM" id="SSF55035">
    <property type="entry name" value="NAD-binding domain of HMG-CoA reductase"/>
    <property type="match status" value="1"/>
</dbReference>
<dbReference type="SUPFAM" id="SSF56542">
    <property type="entry name" value="Substrate-binding domain of HMG-CoA reductase"/>
    <property type="match status" value="1"/>
</dbReference>
<dbReference type="PROSITE" id="PS00066">
    <property type="entry name" value="HMG_COA_REDUCTASE_1"/>
    <property type="match status" value="1"/>
</dbReference>
<dbReference type="PROSITE" id="PS00318">
    <property type="entry name" value="HMG_COA_REDUCTASE_2"/>
    <property type="match status" value="1"/>
</dbReference>
<dbReference type="PROSITE" id="PS01192">
    <property type="entry name" value="HMG_COA_REDUCTASE_3"/>
    <property type="match status" value="1"/>
</dbReference>
<dbReference type="PROSITE" id="PS50065">
    <property type="entry name" value="HMG_COA_REDUCTASE_4"/>
    <property type="match status" value="1"/>
</dbReference>
<sequence>METHRRSSTNSIRSHKPARPIALEDDSTKASDALPLPLYLTNAVFFTLFFSAVYFLLCRWREKIRSSTPLHVVTFSEIVAILASVASFIYLLGFFGIDFVQSLVLRPSADVWATEDDEVESEVLLRNEDARHVPCGQALDRSIRSLQPPEPIVTAEKVFDEMPVTVMTEEDEEIIRSVVCGMTPSYSLESKLDDCKRAAAIRREALQRITGKSLSGLPLDGFDYESILGQCCEMPVGYEQIPVGIAGPLLLNGREYSVPMATTEGCLVASTNRGCKAIHLSGGATSVLLRDGMTRAPVVRFGTAKRAADLKLYLEDPENFETLACVFNRSSRFARLQSIKCAIAGKNLYLRFSCFTGDAMGMNMVSKGVQNVLDFLQTDFPDMDVIGISGNFCSDKKPAAVNWIEGRGKSVVCEAIINGDVVTKVLKTSVESLVELNMLKNLTGSAMAGALGGFNAHASNIVTAVYIATGQDPAQNVESSHCITMMEAVNGGKDLHVSVTMPSIEVGTVGGGTQLASQSACLNLLGVKGASKESPGANSILLATIVAGAVLAGELSLMSALAAGQLVKSHMKYNRSSKDVSKVSS</sequence>
<proteinExistence type="inferred from homology"/>
<keyword id="KW-0256">Endoplasmic reticulum</keyword>
<keyword id="KW-0325">Glycoprotein</keyword>
<keyword id="KW-0414">Isoprene biosynthesis</keyword>
<keyword id="KW-0472">Membrane</keyword>
<keyword id="KW-0496">Mitochondrion</keyword>
<keyword id="KW-0521">NADP</keyword>
<keyword id="KW-0560">Oxidoreductase</keyword>
<keyword id="KW-0934">Plastid</keyword>
<keyword id="KW-1185">Reference proteome</keyword>
<keyword id="KW-0812">Transmembrane</keyword>
<keyword id="KW-1133">Transmembrane helix</keyword>
<name>HMDH1_GOSHI</name>
<gene>
    <name type="primary">HMG1</name>
</gene>
<organism>
    <name type="scientific">Gossypium hirsutum</name>
    <name type="common">Upland cotton</name>
    <name type="synonym">Gossypium mexicanum</name>
    <dbReference type="NCBI Taxonomy" id="3635"/>
    <lineage>
        <taxon>Eukaryota</taxon>
        <taxon>Viridiplantae</taxon>
        <taxon>Streptophyta</taxon>
        <taxon>Embryophyta</taxon>
        <taxon>Tracheophyta</taxon>
        <taxon>Spermatophyta</taxon>
        <taxon>Magnoliopsida</taxon>
        <taxon>eudicotyledons</taxon>
        <taxon>Gunneridae</taxon>
        <taxon>Pentapetalae</taxon>
        <taxon>rosids</taxon>
        <taxon>malvids</taxon>
        <taxon>Malvales</taxon>
        <taxon>Malvaceae</taxon>
        <taxon>Malvoideae</taxon>
        <taxon>Gossypium</taxon>
    </lineage>
</organism>
<reference key="1">
    <citation type="online journal article" date="1998" name="Plant Gene Register">
        <title>Two genomic clones encoding 3-hydroxy-3-methylglutaryl-coenzyme A reductase from cotton (Gossypium hirsutum L.).</title>
        <authorList>
            <person name="Loguercio L.L."/>
            <person name="Wilkins T.A."/>
        </authorList>
        <locator>PGR98-031</locator>
    </citation>
    <scope>NUCLEOTIDE SEQUENCE [GENOMIC DNA]</scope>
    <source>
        <strain>cv. Acala SJ2</strain>
    </source>
</reference>
<evidence type="ECO:0000250" key="1"/>
<evidence type="ECO:0000255" key="2"/>
<evidence type="ECO:0000255" key="3">
    <source>
        <dbReference type="PROSITE-ProRule" id="PRU10003"/>
    </source>
</evidence>
<evidence type="ECO:0000305" key="4"/>
<feature type="chain" id="PRO_0000114438" description="3-hydroxy-3-methylglutaryl-coenzyme A reductase 1">
    <location>
        <begin position="1"/>
        <end position="585"/>
    </location>
</feature>
<feature type="transmembrane region" description="Helical" evidence="2">
    <location>
        <begin position="38"/>
        <end position="58"/>
    </location>
</feature>
<feature type="transmembrane region" description="Helical" evidence="2">
    <location>
        <begin position="77"/>
        <end position="97"/>
    </location>
</feature>
<feature type="region of interest" description="Linker" evidence="1">
    <location>
        <begin position="98"/>
        <end position="169"/>
    </location>
</feature>
<feature type="region of interest" description="Catalytic" evidence="1">
    <location>
        <begin position="170"/>
        <end position="585"/>
    </location>
</feature>
<feature type="active site" description="Charge relay system" evidence="1">
    <location>
        <position position="264"/>
    </location>
</feature>
<feature type="active site" description="Charge relay system" evidence="1">
    <location>
        <position position="396"/>
    </location>
</feature>
<feature type="active site" description="Charge relay system" evidence="1">
    <location>
        <position position="472"/>
    </location>
</feature>
<feature type="active site" description="Proton donor" evidence="3">
    <location>
        <position position="570"/>
    </location>
</feature>
<feature type="glycosylation site" description="N-linked (GlcNAc...) asparagine" evidence="2">
    <location>
        <position position="328"/>
    </location>
</feature>
<feature type="glycosylation site" description="N-linked (GlcNAc...) asparagine" evidence="2">
    <location>
        <position position="441"/>
    </location>
</feature>
<feature type="glycosylation site" description="N-linked (GlcNAc...) asparagine" evidence="2">
    <location>
        <position position="574"/>
    </location>
</feature>
<protein>
    <recommendedName>
        <fullName>3-hydroxy-3-methylglutaryl-coenzyme A reductase 1</fullName>
        <shortName>HMG-CoA reductase 1</shortName>
        <ecNumber>1.1.1.34</ecNumber>
    </recommendedName>
</protein>